<protein>
    <recommendedName>
        <fullName>L-asparaginase-like protein GA18140</fullName>
    </recommendedName>
</protein>
<keyword id="KW-1015">Disulfide bond</keyword>
<keyword id="KW-1185">Reference proteome</keyword>
<keyword id="KW-0732">Signal</keyword>
<evidence type="ECO:0000250" key="1"/>
<evidence type="ECO:0000250" key="2">
    <source>
        <dbReference type="UniProtKB" id="P20933"/>
    </source>
</evidence>
<evidence type="ECO:0000255" key="3"/>
<evidence type="ECO:0000312" key="4">
    <source>
        <dbReference type="EMBL" id="EAL26261.2"/>
    </source>
</evidence>
<dbReference type="EMBL" id="CM000071">
    <property type="protein sequence ID" value="EAL26261.2"/>
    <property type="molecule type" value="Genomic_DNA"/>
</dbReference>
<dbReference type="RefSeq" id="XP_001361682.2">
    <property type="nucleotide sequence ID" value="XM_001361645.3"/>
</dbReference>
<dbReference type="SMR" id="Q28XQ5"/>
<dbReference type="FunCoup" id="Q28XQ5">
    <property type="interactions" value="122"/>
</dbReference>
<dbReference type="STRING" id="46245.Q28XQ5"/>
<dbReference type="MEROPS" id="T02.001"/>
<dbReference type="EnsemblMetazoa" id="FBtr0277603">
    <property type="protein sequence ID" value="FBpp0276041"/>
    <property type="gene ID" value="FBgn0078148"/>
</dbReference>
<dbReference type="KEGG" id="dpo:4805250"/>
<dbReference type="eggNOG" id="KOG1593">
    <property type="taxonomic scope" value="Eukaryota"/>
</dbReference>
<dbReference type="HOGENOM" id="CLU_021603_0_0_1"/>
<dbReference type="InParanoid" id="Q28XQ5"/>
<dbReference type="OMA" id="QAVIQGC"/>
<dbReference type="Proteomes" id="UP000001819">
    <property type="component" value="Chromosome 3"/>
</dbReference>
<dbReference type="Bgee" id="FBgn0078148">
    <property type="expression patterns" value="Expressed in male reproductive system and 1 other cell type or tissue"/>
</dbReference>
<dbReference type="GO" id="GO:0005764">
    <property type="term" value="C:lysosome"/>
    <property type="evidence" value="ECO:0007669"/>
    <property type="project" value="TreeGrafter"/>
</dbReference>
<dbReference type="GO" id="GO:0003948">
    <property type="term" value="F:N4-(beta-N-acetylglucosaminyl)-L-asparaginase activity"/>
    <property type="evidence" value="ECO:0007669"/>
    <property type="project" value="TreeGrafter"/>
</dbReference>
<dbReference type="CDD" id="cd04513">
    <property type="entry name" value="Glycosylasparaginase"/>
    <property type="match status" value="1"/>
</dbReference>
<dbReference type="Gene3D" id="3.60.20.30">
    <property type="entry name" value="(Glycosyl)asparaginase"/>
    <property type="match status" value="1"/>
</dbReference>
<dbReference type="InterPro" id="IPR029055">
    <property type="entry name" value="Ntn_hydrolases_N"/>
</dbReference>
<dbReference type="InterPro" id="IPR000246">
    <property type="entry name" value="Peptidase_T2"/>
</dbReference>
<dbReference type="PANTHER" id="PTHR10188">
    <property type="entry name" value="L-ASPARAGINASE"/>
    <property type="match status" value="1"/>
</dbReference>
<dbReference type="PANTHER" id="PTHR10188:SF6">
    <property type="entry name" value="N(4)-(BETA-N-ACETYLGLUCOSAMINYL)-L-ASPARAGINASE"/>
    <property type="match status" value="1"/>
</dbReference>
<dbReference type="Pfam" id="PF01112">
    <property type="entry name" value="Asparaginase_2"/>
    <property type="match status" value="1"/>
</dbReference>
<dbReference type="SUPFAM" id="SSF56235">
    <property type="entry name" value="N-terminal nucleophile aminohydrolases (Ntn hydrolases)"/>
    <property type="match status" value="1"/>
</dbReference>
<comment type="similarity">
    <text evidence="3">Belongs to the Ntn-hydrolase family.</text>
</comment>
<organism>
    <name type="scientific">Drosophila pseudoobscura pseudoobscura</name>
    <name type="common">Fruit fly</name>
    <dbReference type="NCBI Taxonomy" id="46245"/>
    <lineage>
        <taxon>Eukaryota</taxon>
        <taxon>Metazoa</taxon>
        <taxon>Ecdysozoa</taxon>
        <taxon>Arthropoda</taxon>
        <taxon>Hexapoda</taxon>
        <taxon>Insecta</taxon>
        <taxon>Pterygota</taxon>
        <taxon>Neoptera</taxon>
        <taxon>Endopterygota</taxon>
        <taxon>Diptera</taxon>
        <taxon>Brachycera</taxon>
        <taxon>Muscomorpha</taxon>
        <taxon>Ephydroidea</taxon>
        <taxon>Drosophilidae</taxon>
        <taxon>Drosophila</taxon>
        <taxon>Sophophora</taxon>
    </lineage>
</organism>
<gene>
    <name type="ORF">GA18140</name>
</gene>
<sequence length="457" mass="49694">MRYLCRAQLLSLLLLPLLKARLSVPAHPIPKIFLPLMISTWNYTDANREAWTVLRQGPRRTRQAVIQGCLHCQNSNSCGRLLGGHSAPDSSGGITLEAALIDGANMDYGAVAGMAGIRNAIGVAHDVLRYTNHSLLVGEAAARFAEAMGHKKEVHSLSTTLDVLLPWLLGKCQPNFWRNVRPLANDSCGTFSPLPQEQHQREMRQEYPIEPGHHDQVGFLALDTEGHLHAASLSSGARFRIPGRVGDAAVPGAGIYADNQVGGALATGDGDVLMRFLPALLAVEALRAGQSPASAAEAVMRRLLRHHTEFNGGLVVVSRGGVYSAACAGLDEFQFVVSGESSGRSMRRVEGIKCLDRHEVVTGGPRGNFYVVPKKIWAAGGEDVLVQRVEKITLNEGVDSREFEEEYVEDKAAEIDVDEGEKAEEVRSLLDESPGDLLLHQLGLAPPFPFRFPFIYF</sequence>
<feature type="signal peptide" evidence="3">
    <location>
        <begin position="1"/>
        <end position="20"/>
    </location>
</feature>
<feature type="chain" id="PRO_0000384145" description="L-asparaginase-like protein GA18140">
    <location>
        <begin position="21"/>
        <end position="457"/>
    </location>
</feature>
<feature type="disulfide bond" evidence="2">
    <location>
        <begin position="72"/>
        <end position="78"/>
    </location>
</feature>
<feature type="disulfide bond" evidence="2">
    <location>
        <begin position="172"/>
        <end position="188"/>
    </location>
</feature>
<feature type="disulfide bond" evidence="1">
    <location>
        <begin position="327"/>
        <end position="354"/>
    </location>
</feature>
<accession>Q28XQ5</accession>
<reference evidence="4" key="1">
    <citation type="journal article" date="2005" name="Genome Res.">
        <title>Comparative genome sequencing of Drosophila pseudoobscura: chromosomal, gene, and cis-element evolution.</title>
        <authorList>
            <person name="Richards S."/>
            <person name="Liu Y."/>
            <person name="Bettencourt B.R."/>
            <person name="Hradecky P."/>
            <person name="Letovsky S."/>
            <person name="Nielsen R."/>
            <person name="Thornton K."/>
            <person name="Hubisz M.J."/>
            <person name="Chen R."/>
            <person name="Meisel R.P."/>
            <person name="Couronne O."/>
            <person name="Hua S."/>
            <person name="Smith M.A."/>
            <person name="Zhang P."/>
            <person name="Liu J."/>
            <person name="Bussemaker H.J."/>
            <person name="van Batenburg M.F."/>
            <person name="Howells S.L."/>
            <person name="Scherer S.E."/>
            <person name="Sodergren E."/>
            <person name="Matthews B.B."/>
            <person name="Crosby M.A."/>
            <person name="Schroeder A.J."/>
            <person name="Ortiz-Barrientos D."/>
            <person name="Rives C.M."/>
            <person name="Metzker M.L."/>
            <person name="Muzny D.M."/>
            <person name="Scott G."/>
            <person name="Steffen D."/>
            <person name="Wheeler D.A."/>
            <person name="Worley K.C."/>
            <person name="Havlak P."/>
            <person name="Durbin K.J."/>
            <person name="Egan A."/>
            <person name="Gill R."/>
            <person name="Hume J."/>
            <person name="Morgan M.B."/>
            <person name="Miner G."/>
            <person name="Hamilton C."/>
            <person name="Huang Y."/>
            <person name="Waldron L."/>
            <person name="Verduzco D."/>
            <person name="Clerc-Blankenburg K.P."/>
            <person name="Dubchak I."/>
            <person name="Noor M.A.F."/>
            <person name="Anderson W."/>
            <person name="White K.P."/>
            <person name="Clark A.G."/>
            <person name="Schaeffer S.W."/>
            <person name="Gelbart W.M."/>
            <person name="Weinstock G.M."/>
            <person name="Gibbs R.A."/>
        </authorList>
    </citation>
    <scope>NUCLEOTIDE SEQUENCE [LARGE SCALE GENOMIC DNA]</scope>
    <source>
        <strain>MV2-25 / Tucson 14011-0121.94</strain>
    </source>
</reference>
<name>ASPG2_DROPS</name>
<proteinExistence type="inferred from homology"/>